<evidence type="ECO:0000250" key="1">
    <source>
        <dbReference type="UniProtKB" id="P06493"/>
    </source>
</evidence>
<evidence type="ECO:0000250" key="2">
    <source>
        <dbReference type="UniProtKB" id="P11440"/>
    </source>
</evidence>
<evidence type="ECO:0000250" key="3">
    <source>
        <dbReference type="UniProtKB" id="P13863"/>
    </source>
</evidence>
<evidence type="ECO:0000255" key="4">
    <source>
        <dbReference type="PROSITE-ProRule" id="PRU00159"/>
    </source>
</evidence>
<evidence type="ECO:0000255" key="5">
    <source>
        <dbReference type="PROSITE-ProRule" id="PRU10027"/>
    </source>
</evidence>
<evidence type="ECO:0000305" key="6"/>
<comment type="function">
    <text evidence="1 3">Plays a key role in the control of the eukaryotic cell cycle by modulating the centrosome cycle as well as mitotic onset; promotes G2-M transition via association with multiple interphase cyclins (By similarity). During G2 and early mitosis, CDC25A/B/C-mediated dephosphorylation activates CDK1/cyclin complexes which phosphorylate several substrates that trigger at least centrosome separation, Golgi dynamics, nuclear envelope breakdown and chromosome condensation. Once chromosomes are condensed and aligned at the metaphase plate, CDK1 activity is switched off by WEE1- and PKMYT1-mediated phosphorylation to allow sister chromatid separation, chromosome decondensation, reformation of the nuclear envelope and cytokinesis (By similarity). Catalyzes lamin (LMNA, LMNB1 and LMNB2) phosphorylation at the onset of mitosis, promoting nuclear envelope breakdown (By similarity).</text>
</comment>
<comment type="catalytic activity">
    <reaction evidence="1">
        <text>L-seryl-[protein] + ATP = O-phospho-L-seryl-[protein] + ADP + H(+)</text>
        <dbReference type="Rhea" id="RHEA:17989"/>
        <dbReference type="Rhea" id="RHEA-COMP:9863"/>
        <dbReference type="Rhea" id="RHEA-COMP:11604"/>
        <dbReference type="ChEBI" id="CHEBI:15378"/>
        <dbReference type="ChEBI" id="CHEBI:29999"/>
        <dbReference type="ChEBI" id="CHEBI:30616"/>
        <dbReference type="ChEBI" id="CHEBI:83421"/>
        <dbReference type="ChEBI" id="CHEBI:456216"/>
        <dbReference type="EC" id="2.7.11.22"/>
    </reaction>
</comment>
<comment type="catalytic activity">
    <reaction evidence="1">
        <text>L-threonyl-[protein] + ATP = O-phospho-L-threonyl-[protein] + ADP + H(+)</text>
        <dbReference type="Rhea" id="RHEA:46608"/>
        <dbReference type="Rhea" id="RHEA-COMP:11060"/>
        <dbReference type="Rhea" id="RHEA-COMP:11605"/>
        <dbReference type="ChEBI" id="CHEBI:15378"/>
        <dbReference type="ChEBI" id="CHEBI:30013"/>
        <dbReference type="ChEBI" id="CHEBI:30616"/>
        <dbReference type="ChEBI" id="CHEBI:61977"/>
        <dbReference type="ChEBI" id="CHEBI:456216"/>
        <dbReference type="EC" id="2.7.11.22"/>
    </reaction>
</comment>
<comment type="catalytic activity">
    <reaction evidence="2">
        <text>[DNA-directed RNA polymerase] + ATP = phospho-[DNA-directed RNA polymerase] + ADP + H(+)</text>
        <dbReference type="Rhea" id="RHEA:10216"/>
        <dbReference type="Rhea" id="RHEA-COMP:11321"/>
        <dbReference type="Rhea" id="RHEA-COMP:11322"/>
        <dbReference type="ChEBI" id="CHEBI:15378"/>
        <dbReference type="ChEBI" id="CHEBI:30616"/>
        <dbReference type="ChEBI" id="CHEBI:43176"/>
        <dbReference type="ChEBI" id="CHEBI:68546"/>
        <dbReference type="ChEBI" id="CHEBI:456216"/>
        <dbReference type="EC" id="2.7.11.23"/>
    </reaction>
</comment>
<comment type="activity regulation">
    <text evidence="1">Phosphorylation at Thr-14 or Tyr-15 inactivates the enzyme, while phosphorylation at Thr-161 activates it.</text>
</comment>
<comment type="subunit">
    <text evidence="1">Forms a stable but non-covalent complex with a regulatory subunit and with a cyclin.</text>
</comment>
<comment type="subcellular location">
    <subcellularLocation>
        <location evidence="1">Nucleus</location>
    </subcellularLocation>
    <subcellularLocation>
        <location evidence="1">Cytoplasm</location>
        <location evidence="1">Cytoskeleton</location>
        <location evidence="1">Microtubule organizing center</location>
        <location evidence="1">Centrosome</location>
    </subcellularLocation>
</comment>
<comment type="PTM">
    <text evidence="1">Phosphorylation at Tyr-15 by wee1 and wee2 inhibits the protein kinase activity and acts negative regulator of entry into mitosis (G2 to M transition).</text>
</comment>
<comment type="similarity">
    <text evidence="6">Belongs to the protein kinase superfamily. CMGC Ser/Thr protein kinase family. CDC2/CDKX subfamily.</text>
</comment>
<proteinExistence type="evidence at transcript level"/>
<accession>Q9W739</accession>
<keyword id="KW-0067">ATP-binding</keyword>
<keyword id="KW-0131">Cell cycle</keyword>
<keyword id="KW-0132">Cell division</keyword>
<keyword id="KW-0963">Cytoplasm</keyword>
<keyword id="KW-0206">Cytoskeleton</keyword>
<keyword id="KW-0418">Kinase</keyword>
<keyword id="KW-0498">Mitosis</keyword>
<keyword id="KW-0547">Nucleotide-binding</keyword>
<keyword id="KW-0539">Nucleus</keyword>
<keyword id="KW-0597">Phosphoprotein</keyword>
<keyword id="KW-0723">Serine/threonine-protein kinase</keyword>
<keyword id="KW-0808">Transferase</keyword>
<dbReference type="EC" id="2.7.11.22" evidence="1"/>
<dbReference type="EC" id="2.7.11.23" evidence="2"/>
<dbReference type="EMBL" id="AF159158">
    <property type="protein sequence ID" value="AAD43333.1"/>
    <property type="molecule type" value="mRNA"/>
</dbReference>
<dbReference type="SMR" id="Q9W739"/>
<dbReference type="BRENDA" id="2.7.11.22">
    <property type="organism ID" value="5280"/>
</dbReference>
<dbReference type="GO" id="GO:0005813">
    <property type="term" value="C:centrosome"/>
    <property type="evidence" value="ECO:0007669"/>
    <property type="project" value="UniProtKB-SubCell"/>
</dbReference>
<dbReference type="GO" id="GO:0005737">
    <property type="term" value="C:cytoplasm"/>
    <property type="evidence" value="ECO:0007669"/>
    <property type="project" value="UniProtKB-KW"/>
</dbReference>
<dbReference type="GO" id="GO:0005634">
    <property type="term" value="C:nucleus"/>
    <property type="evidence" value="ECO:0007669"/>
    <property type="project" value="UniProtKB-SubCell"/>
</dbReference>
<dbReference type="GO" id="GO:0005524">
    <property type="term" value="F:ATP binding"/>
    <property type="evidence" value="ECO:0007669"/>
    <property type="project" value="UniProtKB-KW"/>
</dbReference>
<dbReference type="GO" id="GO:0004693">
    <property type="term" value="F:cyclin-dependent protein serine/threonine kinase activity"/>
    <property type="evidence" value="ECO:0000250"/>
    <property type="project" value="UniProtKB"/>
</dbReference>
<dbReference type="GO" id="GO:0106310">
    <property type="term" value="F:protein serine kinase activity"/>
    <property type="evidence" value="ECO:0007669"/>
    <property type="project" value="RHEA"/>
</dbReference>
<dbReference type="GO" id="GO:0008353">
    <property type="term" value="F:RNA polymerase II CTD heptapeptide repeat kinase activity"/>
    <property type="evidence" value="ECO:0007669"/>
    <property type="project" value="UniProtKB-EC"/>
</dbReference>
<dbReference type="GO" id="GO:0051301">
    <property type="term" value="P:cell division"/>
    <property type="evidence" value="ECO:0007669"/>
    <property type="project" value="UniProtKB-KW"/>
</dbReference>
<dbReference type="GO" id="GO:0000086">
    <property type="term" value="P:G2/M transition of mitotic cell cycle"/>
    <property type="evidence" value="ECO:0000250"/>
    <property type="project" value="UniProtKB"/>
</dbReference>
<dbReference type="GO" id="GO:0007095">
    <property type="term" value="P:mitotic G2 DNA damage checkpoint signaling"/>
    <property type="evidence" value="ECO:0007669"/>
    <property type="project" value="TreeGrafter"/>
</dbReference>
<dbReference type="CDD" id="cd07861">
    <property type="entry name" value="STKc_CDK1_euk"/>
    <property type="match status" value="1"/>
</dbReference>
<dbReference type="FunFam" id="1.10.510.10:FF:000231">
    <property type="entry name" value="Cyclin-dependent kinase 1"/>
    <property type="match status" value="1"/>
</dbReference>
<dbReference type="FunFam" id="3.30.200.20:FF:000027">
    <property type="entry name" value="Putative Cyclin-dependent kinase 1"/>
    <property type="match status" value="1"/>
</dbReference>
<dbReference type="Gene3D" id="3.30.200.20">
    <property type="entry name" value="Phosphorylase Kinase, domain 1"/>
    <property type="match status" value="1"/>
</dbReference>
<dbReference type="Gene3D" id="1.10.510.10">
    <property type="entry name" value="Transferase(Phosphotransferase) domain 1"/>
    <property type="match status" value="1"/>
</dbReference>
<dbReference type="InterPro" id="IPR050108">
    <property type="entry name" value="CDK"/>
</dbReference>
<dbReference type="InterPro" id="IPR011009">
    <property type="entry name" value="Kinase-like_dom_sf"/>
</dbReference>
<dbReference type="InterPro" id="IPR000719">
    <property type="entry name" value="Prot_kinase_dom"/>
</dbReference>
<dbReference type="InterPro" id="IPR017441">
    <property type="entry name" value="Protein_kinase_ATP_BS"/>
</dbReference>
<dbReference type="InterPro" id="IPR008271">
    <property type="entry name" value="Ser/Thr_kinase_AS"/>
</dbReference>
<dbReference type="PANTHER" id="PTHR24056">
    <property type="entry name" value="CELL DIVISION PROTEIN KINASE"/>
    <property type="match status" value="1"/>
</dbReference>
<dbReference type="PANTHER" id="PTHR24056:SF334">
    <property type="entry name" value="CYCLIN-DEPENDENT KINASE 1"/>
    <property type="match status" value="1"/>
</dbReference>
<dbReference type="Pfam" id="PF00069">
    <property type="entry name" value="Pkinase"/>
    <property type="match status" value="1"/>
</dbReference>
<dbReference type="SMART" id="SM00220">
    <property type="entry name" value="S_TKc"/>
    <property type="match status" value="1"/>
</dbReference>
<dbReference type="SUPFAM" id="SSF56112">
    <property type="entry name" value="Protein kinase-like (PK-like)"/>
    <property type="match status" value="1"/>
</dbReference>
<dbReference type="PROSITE" id="PS00107">
    <property type="entry name" value="PROTEIN_KINASE_ATP"/>
    <property type="match status" value="1"/>
</dbReference>
<dbReference type="PROSITE" id="PS50011">
    <property type="entry name" value="PROTEIN_KINASE_DOM"/>
    <property type="match status" value="1"/>
</dbReference>
<dbReference type="PROSITE" id="PS00108">
    <property type="entry name" value="PROTEIN_KINASE_ST"/>
    <property type="match status" value="1"/>
</dbReference>
<gene>
    <name type="primary">CDK1</name>
    <name type="synonym">CDC2</name>
</gene>
<sequence>MDEYAKIEKIGEGTYGVVYKGVHKATGQIVAMKKIRLENEEEGVPSTAIREISLLKELQHPNIVCLLDVLMQDSRLYLIFEFLSMDLKKYLDSIPSGQYLEAMLVKSYLYQILQGIIFCHARRVLHRDLKPQNLLIDSKGVIKLADFGLARAFGIPVRVYTHEVVTLWYRAPEVLLGSVRYSTPVDVWSIGTIFAEIASKKPLFHGDSEIDQLFRISELWGTPNNEVWPEVESLQDYKNTFPKWKGGSLAANVKNIDKEGLDLLAKMLVYDPAKRISARKALLHPYFDDLDKSSLPANQIRN</sequence>
<feature type="chain" id="PRO_0000085734" description="Cyclin-dependent kinase 1">
    <location>
        <begin position="1"/>
        <end position="302"/>
    </location>
</feature>
<feature type="domain" description="Protein kinase" evidence="4">
    <location>
        <begin position="4"/>
        <end position="287"/>
    </location>
</feature>
<feature type="active site" description="Proton acceptor" evidence="4 5">
    <location>
        <position position="128"/>
    </location>
</feature>
<feature type="binding site" evidence="4">
    <location>
        <begin position="10"/>
        <end position="18"/>
    </location>
    <ligand>
        <name>ATP</name>
        <dbReference type="ChEBI" id="CHEBI:30616"/>
    </ligand>
</feature>
<feature type="binding site" evidence="4">
    <location>
        <position position="33"/>
    </location>
    <ligand>
        <name>ATP</name>
        <dbReference type="ChEBI" id="CHEBI:30616"/>
    </ligand>
</feature>
<feature type="modified residue" description="Phosphothreonine" evidence="1">
    <location>
        <position position="14"/>
    </location>
</feature>
<feature type="modified residue" description="Phosphotyrosine; by wee1 and wee2" evidence="1">
    <location>
        <position position="15"/>
    </location>
</feature>
<feature type="modified residue" description="Phosphothreonine; by cak" evidence="1">
    <location>
        <position position="161"/>
    </location>
</feature>
<organism>
    <name type="scientific">Rana dybowskii</name>
    <name type="common">Dybovsky's frog</name>
    <name type="synonym">Korean brown frog</name>
    <dbReference type="NCBI Taxonomy" id="71582"/>
    <lineage>
        <taxon>Eukaryota</taxon>
        <taxon>Metazoa</taxon>
        <taxon>Chordata</taxon>
        <taxon>Craniata</taxon>
        <taxon>Vertebrata</taxon>
        <taxon>Euteleostomi</taxon>
        <taxon>Amphibia</taxon>
        <taxon>Batrachia</taxon>
        <taxon>Anura</taxon>
        <taxon>Neobatrachia</taxon>
        <taxon>Ranoidea</taxon>
        <taxon>Ranidae</taxon>
        <taxon>Rana</taxon>
        <taxon>Rana</taxon>
    </lineage>
</organism>
<name>CDK1_RANDY</name>
<reference key="1">
    <citation type="journal article" date="2000" name="Gen. Comp. Endocrinol.">
        <title>Cloning and characterization of cDNA encoding cdc2 kinase, a component of maturation-promoting factor, in Rana dybowskii.</title>
        <authorList>
            <person name="Bandyopadhyay J."/>
            <person name="Bandyopadhyay A."/>
            <person name="Choi H.S."/>
            <person name="Kwon H.B."/>
            <person name="Kang H.M."/>
        </authorList>
    </citation>
    <scope>NUCLEOTIDE SEQUENCE [MRNA]</scope>
    <source>
        <tissue>Ovary</tissue>
    </source>
</reference>
<protein>
    <recommendedName>
        <fullName>Cyclin-dependent kinase 1</fullName>
        <shortName>CDK1</shortName>
        <ecNumber evidence="1">2.7.11.22</ecNumber>
        <ecNumber evidence="2">2.7.11.23</ecNumber>
    </recommendedName>
    <alternativeName>
        <fullName>Cell division control protein 2 homolog</fullName>
    </alternativeName>
    <alternativeName>
        <fullName>Cell division protein kinase 1</fullName>
    </alternativeName>
    <alternativeName>
        <fullName>p34 protein kinase</fullName>
    </alternativeName>
</protein>